<sequence length="522" mass="59346">MLTVPPLIPRLLLALTPLATIAAAFFYFSQTNVLQPTPYIDEIFHIPQTQQYCKGHWNAWDSKITTPPGLYIIGYAWARMLTLTGLSESEACSTLSLRAVNLMAVVIYIPATLYIIQRRVWGSQAHFSAFSLVSFPLIWFYAALYYTDVWSTATVLMALAFALSPRVPFYMVQLSALMCAVSLFFRQTNILWAAVVAVIAIENSHYSNGAPPKNGALAQIFSTISYTFQIELPIFNILISYASVAVGFSFFLYINGGIALGDKDNHVAGNHIPQVFYCALFITTLGFPVWFTWAHLKAYISSSFSVLGLTVRPLFIFVLIPRLLKSYAIEHPFLLADNRHYVFYLWRRLLKPAIYSISVEDVMQSQDAIDPKTLDVISIGLKYALSAAIYFSLWNIWTTLTNSIPAAILVRGRGFNRRNGKSISPAIDLQCLTWPILLAMVFATLASLIPSPLIEPRYYILPYLFWRIYMTPTTAGKRVNTDARFLREWIWYMLINAATVYMFLYKPFEWAHEPGVLQRFMW</sequence>
<feature type="chain" id="PRO_0000215462" description="Dol-P-Glc:Glc(2)Man(9)GlcNAc(2)-PP-Dol alpha-1,2-glucosyltransferase">
    <location>
        <begin position="1"/>
        <end position="522"/>
    </location>
</feature>
<feature type="transmembrane region" description="Helical" evidence="2">
    <location>
        <begin position="8"/>
        <end position="28"/>
    </location>
</feature>
<feature type="transmembrane region" description="Helical" evidence="2">
    <location>
        <begin position="96"/>
        <end position="116"/>
    </location>
</feature>
<feature type="transmembrane region" description="Helical" evidence="2">
    <location>
        <begin position="125"/>
        <end position="145"/>
    </location>
</feature>
<feature type="transmembrane region" description="Helical" evidence="2">
    <location>
        <begin position="152"/>
        <end position="172"/>
    </location>
</feature>
<feature type="transmembrane region" description="Helical" evidence="2">
    <location>
        <begin position="181"/>
        <end position="201"/>
    </location>
</feature>
<feature type="transmembrane region" description="Helical" evidence="2">
    <location>
        <begin position="234"/>
        <end position="254"/>
    </location>
</feature>
<feature type="transmembrane region" description="Helical" evidence="2">
    <location>
        <begin position="275"/>
        <end position="295"/>
    </location>
</feature>
<feature type="transmembrane region" description="Helical" evidence="2">
    <location>
        <begin position="300"/>
        <end position="320"/>
    </location>
</feature>
<feature type="transmembrane region" description="Helical" evidence="2">
    <location>
        <begin position="388"/>
        <end position="410"/>
    </location>
</feature>
<feature type="transmembrane region" description="Helical" evidence="2">
    <location>
        <begin position="434"/>
        <end position="454"/>
    </location>
</feature>
<feature type="transmembrane region" description="Helical" evidence="2">
    <location>
        <begin position="488"/>
        <end position="508"/>
    </location>
</feature>
<name>ALG10_YARLI</name>
<organism>
    <name type="scientific">Yarrowia lipolytica (strain CLIB 122 / E 150)</name>
    <name type="common">Yeast</name>
    <name type="synonym">Candida lipolytica</name>
    <dbReference type="NCBI Taxonomy" id="284591"/>
    <lineage>
        <taxon>Eukaryota</taxon>
        <taxon>Fungi</taxon>
        <taxon>Dikarya</taxon>
        <taxon>Ascomycota</taxon>
        <taxon>Saccharomycotina</taxon>
        <taxon>Dipodascomycetes</taxon>
        <taxon>Dipodascales</taxon>
        <taxon>Dipodascales incertae sedis</taxon>
        <taxon>Yarrowia</taxon>
    </lineage>
</organism>
<reference key="1">
    <citation type="journal article" date="2004" name="Nature">
        <title>Genome evolution in yeasts.</title>
        <authorList>
            <person name="Dujon B."/>
            <person name="Sherman D."/>
            <person name="Fischer G."/>
            <person name="Durrens P."/>
            <person name="Casaregola S."/>
            <person name="Lafontaine I."/>
            <person name="de Montigny J."/>
            <person name="Marck C."/>
            <person name="Neuveglise C."/>
            <person name="Talla E."/>
            <person name="Goffard N."/>
            <person name="Frangeul L."/>
            <person name="Aigle M."/>
            <person name="Anthouard V."/>
            <person name="Babour A."/>
            <person name="Barbe V."/>
            <person name="Barnay S."/>
            <person name="Blanchin S."/>
            <person name="Beckerich J.-M."/>
            <person name="Beyne E."/>
            <person name="Bleykasten C."/>
            <person name="Boisrame A."/>
            <person name="Boyer J."/>
            <person name="Cattolico L."/>
            <person name="Confanioleri F."/>
            <person name="de Daruvar A."/>
            <person name="Despons L."/>
            <person name="Fabre E."/>
            <person name="Fairhead C."/>
            <person name="Ferry-Dumazet H."/>
            <person name="Groppi A."/>
            <person name="Hantraye F."/>
            <person name="Hennequin C."/>
            <person name="Jauniaux N."/>
            <person name="Joyet P."/>
            <person name="Kachouri R."/>
            <person name="Kerrest A."/>
            <person name="Koszul R."/>
            <person name="Lemaire M."/>
            <person name="Lesur I."/>
            <person name="Ma L."/>
            <person name="Muller H."/>
            <person name="Nicaud J.-M."/>
            <person name="Nikolski M."/>
            <person name="Oztas S."/>
            <person name="Ozier-Kalogeropoulos O."/>
            <person name="Pellenz S."/>
            <person name="Potier S."/>
            <person name="Richard G.-F."/>
            <person name="Straub M.-L."/>
            <person name="Suleau A."/>
            <person name="Swennen D."/>
            <person name="Tekaia F."/>
            <person name="Wesolowski-Louvel M."/>
            <person name="Westhof E."/>
            <person name="Wirth B."/>
            <person name="Zeniou-Meyer M."/>
            <person name="Zivanovic Y."/>
            <person name="Bolotin-Fukuhara M."/>
            <person name="Thierry A."/>
            <person name="Bouchier C."/>
            <person name="Caudron B."/>
            <person name="Scarpelli C."/>
            <person name="Gaillardin C."/>
            <person name="Weissenbach J."/>
            <person name="Wincker P."/>
            <person name="Souciet J.-L."/>
        </authorList>
    </citation>
    <scope>NUCLEOTIDE SEQUENCE [LARGE SCALE GENOMIC DNA]</scope>
    <source>
        <strain>CLIB 122 / E 150</strain>
    </source>
</reference>
<protein>
    <recommendedName>
        <fullName evidence="1">Dol-P-Glc:Glc(2)Man(9)GlcNAc(2)-PP-Dol alpha-1,2-glucosyltransferase</fullName>
        <ecNumber evidence="1">2.4.1.256</ecNumber>
    </recommendedName>
    <alternativeName>
        <fullName>Alpha-1,2-glucosyltransferase ALG10-A</fullName>
    </alternativeName>
    <alternativeName>
        <fullName>Alpha-2-glucosyltransferase ALG10</fullName>
    </alternativeName>
    <alternativeName>
        <fullName>Asparagine-linked glycosylation protein 10</fullName>
    </alternativeName>
    <alternativeName>
        <fullName>Dolichyl-phosphoglucose-dependent glucosyltransferase ALG10</fullName>
    </alternativeName>
</protein>
<proteinExistence type="inferred from homology"/>
<dbReference type="EC" id="2.4.1.256" evidence="1"/>
<dbReference type="EMBL" id="CR382128">
    <property type="protein sequence ID" value="CAG83260.1"/>
    <property type="molecule type" value="Genomic_DNA"/>
</dbReference>
<dbReference type="RefSeq" id="XP_501007.1">
    <property type="nucleotide sequence ID" value="XM_501007.1"/>
</dbReference>
<dbReference type="FunCoup" id="Q6CEA5">
    <property type="interactions" value="701"/>
</dbReference>
<dbReference type="STRING" id="284591.Q6CEA5"/>
<dbReference type="CAZy" id="GT59">
    <property type="family name" value="Glycosyltransferase Family 59"/>
</dbReference>
<dbReference type="EnsemblFungi" id="CAG83260">
    <property type="protein sequence ID" value="CAG83260"/>
    <property type="gene ID" value="YALI0_B17226g"/>
</dbReference>
<dbReference type="KEGG" id="yli:2906680"/>
<dbReference type="VEuPathDB" id="FungiDB:YALI0_B17226g"/>
<dbReference type="HOGENOM" id="CLU_017053_1_0_1"/>
<dbReference type="InParanoid" id="Q6CEA5"/>
<dbReference type="OMA" id="VWDSKIT"/>
<dbReference type="OrthoDB" id="40762at4891"/>
<dbReference type="UniPathway" id="UPA00378"/>
<dbReference type="Proteomes" id="UP000001300">
    <property type="component" value="Chromosome B"/>
</dbReference>
<dbReference type="GO" id="GO:0005783">
    <property type="term" value="C:endoplasmic reticulum"/>
    <property type="evidence" value="ECO:0000318"/>
    <property type="project" value="GO_Central"/>
</dbReference>
<dbReference type="GO" id="GO:0005789">
    <property type="term" value="C:endoplasmic reticulum membrane"/>
    <property type="evidence" value="ECO:0007669"/>
    <property type="project" value="UniProtKB-SubCell"/>
</dbReference>
<dbReference type="GO" id="GO:0106073">
    <property type="term" value="F:dolichyl pyrophosphate Glc2Man9GlcNAc2 alpha-1,2-glucosyltransferase activity"/>
    <property type="evidence" value="ECO:0000318"/>
    <property type="project" value="GO_Central"/>
</dbReference>
<dbReference type="GO" id="GO:0006488">
    <property type="term" value="P:dolichol-linked oligosaccharide biosynthetic process"/>
    <property type="evidence" value="ECO:0007669"/>
    <property type="project" value="InterPro"/>
</dbReference>
<dbReference type="GO" id="GO:0006487">
    <property type="term" value="P:protein N-linked glycosylation"/>
    <property type="evidence" value="ECO:0000318"/>
    <property type="project" value="GO_Central"/>
</dbReference>
<dbReference type="InterPro" id="IPR016900">
    <property type="entry name" value="Alg10"/>
</dbReference>
<dbReference type="PANTHER" id="PTHR12989">
    <property type="entry name" value="ALPHA-1,2-GLUCOSYLTRANSFERASE ALG10"/>
    <property type="match status" value="1"/>
</dbReference>
<dbReference type="PANTHER" id="PTHR12989:SF10">
    <property type="entry name" value="DOL-P-GLC:GLC(2)MAN(9)GLCNAC(2)-PP-DOL ALPHA-1,2-GLUCOSYLTRANSFERASE-RELATED"/>
    <property type="match status" value="1"/>
</dbReference>
<dbReference type="Pfam" id="PF04922">
    <property type="entry name" value="DIE2_ALG10"/>
    <property type="match status" value="1"/>
</dbReference>
<dbReference type="PIRSF" id="PIRSF028810">
    <property type="entry name" value="Alpha1_2_glucosyltferase_Alg10"/>
    <property type="match status" value="1"/>
</dbReference>
<accession>Q6CEA5</accession>
<gene>
    <name type="primary">ALG10</name>
    <name type="ordered locus">YALI0B17226g</name>
</gene>
<keyword id="KW-0256">Endoplasmic reticulum</keyword>
<keyword id="KW-0328">Glycosyltransferase</keyword>
<keyword id="KW-0472">Membrane</keyword>
<keyword id="KW-1185">Reference proteome</keyword>
<keyword id="KW-0808">Transferase</keyword>
<keyword id="KW-0812">Transmembrane</keyword>
<keyword id="KW-1133">Transmembrane helix</keyword>
<comment type="function">
    <text evidence="1">Dol-P-Glc:Glc(2)Man(9)GlcNAc(2)-PP-Dol alpha-1,2-glucosyltransferase that operates in the biosynthetic pathway of dolichol-linked oligosaccharides, the glycan precursors employed in protein asparagine (N)-glycosylation. The assembly of dolichol-linked oligosaccharides begins on the cytosolic side of the endoplasmic reticulum membrane and finishes in its lumen. The sequential addition of sugars to dolichol pyrophosphate produces dolichol-linked oligosaccharides containing fourteen sugars, including two GlcNAcs, nine mannoses and three glucoses. Once assembled, the oligosaccharide is transferred from the lipid to nascent proteins by oligosaccharyltransferases. In the lumen of the endoplasmic reticulum, adds the third and last glucose residue from dolichyl phosphate glucose (Dol-P-Glc) onto the lipid-linked oligosaccharide intermediate Glc(2)Man(9)GlcNAc(2)-PP-Dol to produce Glc(3)Man(9)GlcNAc(2)-PP-Dol.</text>
</comment>
<comment type="catalytic activity">
    <reaction evidence="1">
        <text>an alpha-D-Glc-(1-&gt;3)-alpha-D-Glc-(1-&gt;3)-alpha-D-Man-(1-&gt;2)-alpha-D-Man-(1-&gt;2)-alpha-D-Man-(1-&gt;3)-[alpha-D-Man-(1-&gt;2)-alpha-D-Man-(1-&gt;3)-[alpha-D-Man-(1-&gt;2)-alpha-D-Man-(1-&gt;6)]-alpha-D-Man-(1-&gt;6)]-beta-D-Man-(1-&gt;4)-beta-D-GlcNAc-(1-&gt;4)-alpha-D-GlcNAc-diphospho-di-trans,poly-cis-dolichol + a di-trans,poly-cis-dolichyl beta-D-glucosyl phosphate = a alpha-D-Glc-(1-&gt;2)-alpha-D-Glc-(1-&gt;3)-alpha-D-Glc-(1-&gt;3)-alpha-D-Man-(1-&gt;2)-alpha-D-Man-(1-&gt;2)-alpha-D-Man-(1-&gt;3)-[alpha-D-Man-(1-&gt;2)-alpha-D-Man-(1-&gt;3)-[alpha-D-Man-(1-&gt;2)-alpha-D-Man-(1-&gt;6)]-alpha-D-Man-(1-&gt;6)]-beta-D-Man-(1-&gt;4)-beta-D-GlcNAc-(1-&gt;4)-alpha-D-GlcNAc-diphospho-di-trans,poly-cis-dolichol + a di-trans,poly-cis-dolichyl phosphate + H(+)</text>
        <dbReference type="Rhea" id="RHEA:29543"/>
        <dbReference type="Rhea" id="RHEA-COMP:19498"/>
        <dbReference type="Rhea" id="RHEA-COMP:19502"/>
        <dbReference type="Rhea" id="RHEA-COMP:19512"/>
        <dbReference type="Rhea" id="RHEA-COMP:19522"/>
        <dbReference type="ChEBI" id="CHEBI:15378"/>
        <dbReference type="ChEBI" id="CHEBI:57525"/>
        <dbReference type="ChEBI" id="CHEBI:57683"/>
        <dbReference type="ChEBI" id="CHEBI:132522"/>
        <dbReference type="ChEBI" id="CHEBI:132523"/>
        <dbReference type="EC" id="2.4.1.256"/>
    </reaction>
    <physiologicalReaction direction="left-to-right" evidence="1">
        <dbReference type="Rhea" id="RHEA:29544"/>
    </physiologicalReaction>
</comment>
<comment type="pathway">
    <text evidence="1">Protein modification; protein glycosylation.</text>
</comment>
<comment type="subcellular location">
    <subcellularLocation>
        <location evidence="1">Endoplasmic reticulum membrane</location>
        <topology evidence="2">Multi-pass membrane protein</topology>
    </subcellularLocation>
</comment>
<comment type="similarity">
    <text evidence="3">Belongs to the ALG10 glucosyltransferase family.</text>
</comment>
<evidence type="ECO:0000250" key="1">
    <source>
        <dbReference type="UniProtKB" id="P50076"/>
    </source>
</evidence>
<evidence type="ECO:0000255" key="2"/>
<evidence type="ECO:0000305" key="3"/>